<organism>
    <name type="scientific">Sordaria macrospora (strain ATCC MYA-333 / DSM 997 / K(L3346) / K-hell)</name>
    <dbReference type="NCBI Taxonomy" id="771870"/>
    <lineage>
        <taxon>Eukaryota</taxon>
        <taxon>Fungi</taxon>
        <taxon>Dikarya</taxon>
        <taxon>Ascomycota</taxon>
        <taxon>Pezizomycotina</taxon>
        <taxon>Sordariomycetes</taxon>
        <taxon>Sordariomycetidae</taxon>
        <taxon>Sordariales</taxon>
        <taxon>Sordariaceae</taxon>
        <taxon>Sordaria</taxon>
    </lineage>
</organism>
<gene>
    <name type="primary">DAPB</name>
    <name type="ORF">SMAC_05958</name>
</gene>
<accession>D1Z9B4</accession>
<accession>F7VTE6</accession>
<reference key="1">
    <citation type="journal article" date="2010" name="PLoS Genet.">
        <title>De novo assembly of a 40 Mb eukaryotic genome from short sequence reads: Sordaria macrospora, a model organism for fungal morphogenesis.</title>
        <authorList>
            <person name="Nowrousian M."/>
            <person name="Stajich J.E."/>
            <person name="Chu M."/>
            <person name="Engh I."/>
            <person name="Espagne E."/>
            <person name="Halliday K."/>
            <person name="Kamerewerd J."/>
            <person name="Kempken F."/>
            <person name="Knab B."/>
            <person name="Kuo H.-C."/>
            <person name="Osiewacz H.D."/>
            <person name="Poeggeler S."/>
            <person name="Read N.D."/>
            <person name="Seiler S."/>
            <person name="Smith K.M."/>
            <person name="Zickler D."/>
            <person name="Kueck U."/>
            <person name="Freitag M."/>
        </authorList>
    </citation>
    <scope>NUCLEOTIDE SEQUENCE [LARGE SCALE GENOMIC DNA]</scope>
    <source>
        <strain>ATCC MYA-333 / DSM 997 / K(L3346) / K-hell</strain>
    </source>
</reference>
<evidence type="ECO:0000250" key="1"/>
<evidence type="ECO:0000255" key="2"/>
<evidence type="ECO:0000255" key="3">
    <source>
        <dbReference type="PROSITE-ProRule" id="PRU10084"/>
    </source>
</evidence>
<evidence type="ECO:0000256" key="4">
    <source>
        <dbReference type="SAM" id="MobiDB-lite"/>
    </source>
</evidence>
<evidence type="ECO:0000305" key="5"/>
<feature type="chain" id="PRO_0000412163" description="Probable dipeptidyl-aminopeptidase B">
    <location>
        <begin position="1"/>
        <end position="924"/>
    </location>
</feature>
<feature type="topological domain" description="Cytoplasmic" evidence="2">
    <location>
        <begin position="1"/>
        <end position="111"/>
    </location>
</feature>
<feature type="transmembrane region" description="Helical; Signal-anchor for type II membrane protein" evidence="2">
    <location>
        <begin position="112"/>
        <end position="132"/>
    </location>
</feature>
<feature type="topological domain" description="Vacuolar" evidence="2">
    <location>
        <begin position="133"/>
        <end position="924"/>
    </location>
</feature>
<feature type="region of interest" description="Disordered" evidence="4">
    <location>
        <begin position="1"/>
        <end position="104"/>
    </location>
</feature>
<feature type="compositionally biased region" description="Basic and acidic residues" evidence="4">
    <location>
        <begin position="9"/>
        <end position="23"/>
    </location>
</feature>
<feature type="compositionally biased region" description="Polar residues" evidence="4">
    <location>
        <begin position="31"/>
        <end position="43"/>
    </location>
</feature>
<feature type="compositionally biased region" description="Basic and acidic residues" evidence="4">
    <location>
        <begin position="47"/>
        <end position="58"/>
    </location>
</feature>
<feature type="compositionally biased region" description="Basic and acidic residues" evidence="4">
    <location>
        <begin position="92"/>
        <end position="104"/>
    </location>
</feature>
<feature type="active site" description="Charge relay system" evidence="3">
    <location>
        <position position="768"/>
    </location>
</feature>
<feature type="active site" description="Charge relay system" evidence="3">
    <location>
        <position position="845"/>
    </location>
</feature>
<feature type="active site" description="Charge relay system" evidence="3">
    <location>
        <position position="878"/>
    </location>
</feature>
<feature type="glycosylation site" description="N-linked (GlcNAc...) asparagine" evidence="2">
    <location>
        <position position="231"/>
    </location>
</feature>
<feature type="glycosylation site" description="N-linked (GlcNAc...) asparagine" evidence="2">
    <location>
        <position position="364"/>
    </location>
</feature>
<feature type="glycosylation site" description="N-linked (GlcNAc...) asparagine" evidence="2">
    <location>
        <position position="827"/>
    </location>
</feature>
<keyword id="KW-0031">Aminopeptidase</keyword>
<keyword id="KW-0325">Glycoprotein</keyword>
<keyword id="KW-0378">Hydrolase</keyword>
<keyword id="KW-0472">Membrane</keyword>
<keyword id="KW-0645">Protease</keyword>
<keyword id="KW-1185">Reference proteome</keyword>
<keyword id="KW-0720">Serine protease</keyword>
<keyword id="KW-0735">Signal-anchor</keyword>
<keyword id="KW-0812">Transmembrane</keyword>
<keyword id="KW-1133">Transmembrane helix</keyword>
<keyword id="KW-0926">Vacuole</keyword>
<name>DAPB_SORMK</name>
<comment type="function">
    <text evidence="1">Type IV dipeptidyl-peptidase which removes N-terminal dipeptides sequentially from polypeptides having unsubstituted N-termini provided that the penultimate residue is proline.</text>
</comment>
<comment type="catalytic activity">
    <reaction evidence="3">
        <text>Release of an N-terminal dipeptide, Xaa-Yaa-|-Zaa-, from a polypeptide, preferentially when Yaa is Pro, provided Zaa is neither Pro nor hydroxyproline.</text>
        <dbReference type="EC" id="3.4.14.5"/>
    </reaction>
</comment>
<comment type="subcellular location">
    <subcellularLocation>
        <location evidence="1">Vacuole membrane</location>
        <topology evidence="1">Single-pass type II membrane protein</topology>
    </subcellularLocation>
    <text evidence="1">Lysosome-like vacuoles.</text>
</comment>
<comment type="similarity">
    <text evidence="5">Belongs to the peptidase S9B family.</text>
</comment>
<protein>
    <recommendedName>
        <fullName>Probable dipeptidyl-aminopeptidase B</fullName>
        <shortName>DPAP B</shortName>
        <ecNumber>3.4.14.5</ecNumber>
    </recommendedName>
</protein>
<sequence>MPPFTYSDDTLRSGRDRFRDHSPSQHRRSMSQETDSSASTTSIVFDRIQERLDTKEFTPRGTDGDDDGSLKDELNNDDLETGPFLGNADSSSRSDQRSPGDGQRMDRSLRRWLFIVSGVLVATWVIGLFVFVSSKAYKPSSSFAHDPQATVTHGTGKKVTLDQVLNNQWRAKSHSISWIAGANGEDGLLLEKEGVGKDYLVVEDVRAQNPSSVQASKSKALIKEKLFEFANKTYWPSITVPSRDLKKVLLATDVKNNWRHSYYAVYWIFDVETQQVEPLVPYDVEARLQLASWSPTSDAIVYTRDNNMFLRKLGSDKIVQITRDGSADVFNGVPDWVYEEEVLASGVATWWSEDGQYVAFLRTNETGVPEYPIQYFVSRPSGEEPKPGEENYPEVRQIKYPKAGAHNPIVDLKFYDVKRGDVFSVDISGRFADDDRLITEVVWAGKQVLIKETNRVSDVMRVVLVDVGSRTGKAVRTVDVNAIDGGWFEISHKTKFIPADPVNGRPDDGYVDTIIHDNGDHLAYFTPLDNPEPIMLTSGDYEVVDAPSAVDLQRNLVYFVSTKESSIQRHVYQVKLTGEDMTPVTDTSKEGYYAISFSTGAGYAMVSYQGPDIPWQKVISTPSNPDKYEYVVEENKDLAEAAKKHELPINIYGTINVDGVDLNYVERRPPHFDKNKKYPVLFQQYSGPVSQTVKKTFAVDFQSFVAAGLGYICVTVDGRGTGFIGRKNRVIIRGDLGHWESHDQIAAAKHWAQKDYIDEDRLAIWGWSYGGYMTLKTLEQDAGQTFKYGMAVAPVTDWRFYDSIYTERYMRTPQTNLEGYDSAAVTNATALSQNVRFLLMHGVADDNVHMQNSLTLLDALDQRSVENYDVHVFPDSDHGIYFHNANRIVFDKLTNWLVNAFNGEWLKIANAQPNGMKKRAAPTA</sequence>
<dbReference type="EC" id="3.4.14.5"/>
<dbReference type="EMBL" id="CABT02000006">
    <property type="protein sequence ID" value="CCC08602.1"/>
    <property type="molecule type" value="Genomic_DNA"/>
</dbReference>
<dbReference type="RefSeq" id="XP_003351079.1">
    <property type="nucleotide sequence ID" value="XM_003351031.1"/>
</dbReference>
<dbReference type="SMR" id="D1Z9B4"/>
<dbReference type="FunCoup" id="D1Z9B4">
    <property type="interactions" value="296"/>
</dbReference>
<dbReference type="STRING" id="771870.D1Z9B4"/>
<dbReference type="ESTHER" id="neucr-q7shu8">
    <property type="family name" value="DPP4N_Peptidase_S9"/>
</dbReference>
<dbReference type="GlyCosmos" id="D1Z9B4">
    <property type="glycosylation" value="3 sites, No reported glycans"/>
</dbReference>
<dbReference type="GeneID" id="10808655"/>
<dbReference type="KEGG" id="smp:10808655"/>
<dbReference type="VEuPathDB" id="FungiDB:SMAC_05958"/>
<dbReference type="eggNOG" id="KOG2100">
    <property type="taxonomic scope" value="Eukaryota"/>
</dbReference>
<dbReference type="HOGENOM" id="CLU_006105_0_1_1"/>
<dbReference type="InParanoid" id="D1Z9B4"/>
<dbReference type="OMA" id="MRTPQEN"/>
<dbReference type="OrthoDB" id="16520at2759"/>
<dbReference type="Proteomes" id="UP000001881">
    <property type="component" value="Unassembled WGS sequence"/>
</dbReference>
<dbReference type="GO" id="GO:0000329">
    <property type="term" value="C:fungal-type vacuole membrane"/>
    <property type="evidence" value="ECO:0007669"/>
    <property type="project" value="EnsemblFungi"/>
</dbReference>
<dbReference type="GO" id="GO:0005886">
    <property type="term" value="C:plasma membrane"/>
    <property type="evidence" value="ECO:0007669"/>
    <property type="project" value="TreeGrafter"/>
</dbReference>
<dbReference type="GO" id="GO:0004177">
    <property type="term" value="F:aminopeptidase activity"/>
    <property type="evidence" value="ECO:0007669"/>
    <property type="project" value="UniProtKB-KW"/>
</dbReference>
<dbReference type="GO" id="GO:0008239">
    <property type="term" value="F:dipeptidyl-peptidase activity"/>
    <property type="evidence" value="ECO:0007669"/>
    <property type="project" value="UniProtKB-EC"/>
</dbReference>
<dbReference type="GO" id="GO:0004252">
    <property type="term" value="F:serine-type endopeptidase activity"/>
    <property type="evidence" value="ECO:0007669"/>
    <property type="project" value="InterPro"/>
</dbReference>
<dbReference type="GO" id="GO:0006508">
    <property type="term" value="P:proteolysis"/>
    <property type="evidence" value="ECO:0007669"/>
    <property type="project" value="UniProtKB-KW"/>
</dbReference>
<dbReference type="FunFam" id="3.40.50.1820:FF:000003">
    <property type="entry name" value="Dipeptidyl peptidase 4"/>
    <property type="match status" value="1"/>
</dbReference>
<dbReference type="Gene3D" id="3.40.50.1820">
    <property type="entry name" value="alpha/beta hydrolase"/>
    <property type="match status" value="1"/>
</dbReference>
<dbReference type="Gene3D" id="2.140.10.30">
    <property type="entry name" value="Dipeptidylpeptidase IV, N-terminal domain"/>
    <property type="match status" value="1"/>
</dbReference>
<dbReference type="InterPro" id="IPR029058">
    <property type="entry name" value="AB_hydrolase_fold"/>
</dbReference>
<dbReference type="InterPro" id="IPR002471">
    <property type="entry name" value="Pept_S9_AS"/>
</dbReference>
<dbReference type="InterPro" id="IPR001375">
    <property type="entry name" value="Peptidase_S9_cat"/>
</dbReference>
<dbReference type="InterPro" id="IPR002469">
    <property type="entry name" value="Peptidase_S9B_N"/>
</dbReference>
<dbReference type="InterPro" id="IPR050278">
    <property type="entry name" value="Serine_Prot_S9B/DPPIV"/>
</dbReference>
<dbReference type="PANTHER" id="PTHR11731:SF200">
    <property type="entry name" value="DIPEPTIDYL PEPTIDASE 10, ISOFORM B"/>
    <property type="match status" value="1"/>
</dbReference>
<dbReference type="PANTHER" id="PTHR11731">
    <property type="entry name" value="PROTEASE FAMILY S9B,C DIPEPTIDYL-PEPTIDASE IV-RELATED"/>
    <property type="match status" value="1"/>
</dbReference>
<dbReference type="Pfam" id="PF00930">
    <property type="entry name" value="DPPIV_N"/>
    <property type="match status" value="1"/>
</dbReference>
<dbReference type="Pfam" id="PF00326">
    <property type="entry name" value="Peptidase_S9"/>
    <property type="match status" value="1"/>
</dbReference>
<dbReference type="SUPFAM" id="SSF53474">
    <property type="entry name" value="alpha/beta-Hydrolases"/>
    <property type="match status" value="1"/>
</dbReference>
<dbReference type="SUPFAM" id="SSF82171">
    <property type="entry name" value="DPP6 N-terminal domain-like"/>
    <property type="match status" value="1"/>
</dbReference>
<dbReference type="PROSITE" id="PS00708">
    <property type="entry name" value="PRO_ENDOPEP_SER"/>
    <property type="match status" value="1"/>
</dbReference>
<proteinExistence type="inferred from homology"/>